<accession>Q80DN6</accession>
<organism>
    <name type="scientific">Influenza B virus (strain B/Memphis/12/1997)</name>
    <dbReference type="NCBI Taxonomy" id="98832"/>
    <lineage>
        <taxon>Viruses</taxon>
        <taxon>Riboviria</taxon>
        <taxon>Orthornavirae</taxon>
        <taxon>Negarnaviricota</taxon>
        <taxon>Polyploviricotina</taxon>
        <taxon>Insthoviricetes</taxon>
        <taxon>Articulavirales</taxon>
        <taxon>Orthomyxoviridae</taxon>
        <taxon>Betainfluenzavirus</taxon>
        <taxon>Betainfluenzavirus influenzae</taxon>
        <taxon>Influenza B virus</taxon>
    </lineage>
</organism>
<reference key="1">
    <citation type="journal article" date="2004" name="J. Virol.">
        <title>Multiple genotypes of influenza B virus circulated between 1979 and 2003.</title>
        <authorList>
            <person name="McCullers J.A."/>
            <person name="Saito T."/>
            <person name="Iverson A.R."/>
        </authorList>
    </citation>
    <scope>NUCLEOTIDE SEQUENCE [GENOMIC RNA]</scope>
</reference>
<proteinExistence type="inferred from homology"/>
<feature type="chain" id="PRO_0000078899" description="Matrix protein 2">
    <location>
        <begin position="1"/>
        <end position="109"/>
    </location>
</feature>
<feature type="topological domain" description="Virion surface" evidence="2">
    <location>
        <begin position="1"/>
        <end position="4"/>
    </location>
</feature>
<feature type="transmembrane region" description="Helical; Signal-anchor for type III membrane protein" evidence="2">
    <location>
        <begin position="5"/>
        <end position="27"/>
    </location>
</feature>
<feature type="topological domain" description="Intravirion" evidence="2">
    <location>
        <begin position="28"/>
        <end position="109"/>
    </location>
</feature>
<feature type="coiled-coil region" evidence="2">
    <location>
        <begin position="58"/>
        <end position="83"/>
    </location>
</feature>
<feature type="site" description="Essential for channel activity, possibly by being protonated during channel activation, and by forming the channel gate and the selective filter" evidence="1">
    <location>
        <position position="19"/>
    </location>
</feature>
<feature type="site" description="Seems to be involved in pH gating" evidence="1">
    <location>
        <position position="23"/>
    </location>
</feature>
<organismHost>
    <name type="scientific">Homo sapiens</name>
    <name type="common">Human</name>
    <dbReference type="NCBI Taxonomy" id="9606"/>
</organismHost>
<protein>
    <recommendedName>
        <fullName>Matrix protein 2</fullName>
    </recommendedName>
    <alternativeName>
        <fullName>BM2</fullName>
    </alternativeName>
</protein>
<evidence type="ECO:0000250" key="1"/>
<evidence type="ECO:0000255" key="2"/>
<evidence type="ECO:0000305" key="3"/>
<keyword id="KW-0175">Coiled coil</keyword>
<keyword id="KW-1032">Host cell membrane</keyword>
<keyword id="KW-1043">Host membrane</keyword>
<keyword id="KW-0375">Hydrogen ion transport</keyword>
<keyword id="KW-0407">Ion channel</keyword>
<keyword id="KW-0406">Ion transport</keyword>
<keyword id="KW-0472">Membrane</keyword>
<keyword id="KW-0597">Phosphoprotein</keyword>
<keyword id="KW-0735">Signal-anchor</keyword>
<keyword id="KW-0812">Transmembrane</keyword>
<keyword id="KW-1133">Transmembrane helix</keyword>
<keyword id="KW-0813">Transport</keyword>
<keyword id="KW-1182">Viral ion channel</keyword>
<keyword id="KW-0946">Virion</keyword>
<dbReference type="EMBL" id="AY260941">
    <property type="protein sequence ID" value="AAP22105.1"/>
    <property type="molecule type" value="Genomic_RNA"/>
</dbReference>
<dbReference type="SMR" id="Q80DN6"/>
<dbReference type="GO" id="GO:0020002">
    <property type="term" value="C:host cell plasma membrane"/>
    <property type="evidence" value="ECO:0007669"/>
    <property type="project" value="UniProtKB-SubCell"/>
</dbReference>
<dbReference type="GO" id="GO:0016020">
    <property type="term" value="C:membrane"/>
    <property type="evidence" value="ECO:0007669"/>
    <property type="project" value="UniProtKB-KW"/>
</dbReference>
<dbReference type="GO" id="GO:0055036">
    <property type="term" value="C:virion membrane"/>
    <property type="evidence" value="ECO:0007669"/>
    <property type="project" value="UniProtKB-SubCell"/>
</dbReference>
<dbReference type="GO" id="GO:0015267">
    <property type="term" value="F:channel activity"/>
    <property type="evidence" value="ECO:0007669"/>
    <property type="project" value="UniProtKB-KW"/>
</dbReference>
<dbReference type="GO" id="GO:1902600">
    <property type="term" value="P:proton transmembrane transport"/>
    <property type="evidence" value="ECO:0007669"/>
    <property type="project" value="UniProtKB-KW"/>
</dbReference>
<dbReference type="Gene3D" id="6.10.250.350">
    <property type="match status" value="1"/>
</dbReference>
<dbReference type="InterPro" id="IPR006859">
    <property type="entry name" value="Flu_B_M2"/>
</dbReference>
<dbReference type="Pfam" id="PF04772">
    <property type="entry name" value="Flu_B_M2"/>
    <property type="match status" value="1"/>
</dbReference>
<name>BM2_INBMP</name>
<comment type="function">
    <text evidence="1">Forms presumably a highly low-pH gated proton-selective channel. Trp-23 may function as a minimalistic gate that opens and closes the pore. When the environmental pH is lower than a threshold, the BM2 channel would be activated and selectively transport protons across the membrane from the extracellular side to the cytoplasmic side. Crucial for the uncoating process. When the virion is internalized into the endosome, the channel acidifies the virion's interior, promoting the dissociation of matrix protein 1 (M1) from the ribonucleoprotein (RNP) thus allowing the transport of the RNP from the virion into the cell's nucleus. Also plays a role in viral proteins secretory pathway. Elevates the intravesicular pH of normally acidic compartments, such as trans-Golgi network, preventing newly formed hemagglutinin from premature switching to the fusion-active conformation (By similarity). Plays a crucial role in virion assembly. Expressed in the late phase of the infection.</text>
</comment>
<comment type="subunit">
    <text evidence="1">Homotetramer.</text>
</comment>
<comment type="subcellular location">
    <subcellularLocation>
        <location evidence="3">Virion membrane</location>
        <topology evidence="3">Single-pass type III membrane protein</topology>
    </subcellularLocation>
    <subcellularLocation>
        <location evidence="1">Host cell membrane</location>
        <topology evidence="1">Single-pass type III membrane protein</topology>
    </subcellularLocation>
    <text evidence="1">Transported to the plasma membrane through the trans Golgi network.</text>
</comment>
<comment type="PTM">
    <text>Phosphorylated by host.</text>
</comment>
<comment type="miscellaneous">
    <text>Influenza B virus genome RNA segment 7 encodes the M1 (AC Q76ZA3) and BM2 proteins. Normal translation produces the M1 protein. The M1 termination codon overlaps the BM2 initiation codon in an overlapping stop-start pentanucleotide 5'-UAAUG-3'. Termination of M1 translation triggers reinitiation on the BM2 AUG in the +2 open reading frame.</text>
</comment>
<gene>
    <name type="primary">M</name>
</gene>
<sequence>MLEPFQILSICSFILSALHFMAWTIGHLNQIKRGVNMKIRIKGPNKETINREVSILRHSYQKEIQAKETMKEVLSDNMEVLSDHIVIEGLSAEEIIKMGETVLEIEELH</sequence>